<comment type="subcellular location">
    <subcellularLocation>
        <location evidence="3">Nucleus</location>
        <location evidence="3">Nucleolus</location>
    </subcellularLocation>
</comment>
<organism>
    <name type="scientific">Schizosaccharomyces pombe (strain 972 / ATCC 24843)</name>
    <name type="common">Fission yeast</name>
    <dbReference type="NCBI Taxonomy" id="284812"/>
    <lineage>
        <taxon>Eukaryota</taxon>
        <taxon>Fungi</taxon>
        <taxon>Dikarya</taxon>
        <taxon>Ascomycota</taxon>
        <taxon>Taphrinomycotina</taxon>
        <taxon>Schizosaccharomycetes</taxon>
        <taxon>Schizosaccharomycetales</taxon>
        <taxon>Schizosaccharomycetaceae</taxon>
        <taxon>Schizosaccharomyces</taxon>
    </lineage>
</organism>
<evidence type="ECO:0000255" key="1">
    <source>
        <dbReference type="PROSITE-ProRule" id="PRU00176"/>
    </source>
</evidence>
<evidence type="ECO:0000256" key="2">
    <source>
        <dbReference type="SAM" id="MobiDB-lite"/>
    </source>
</evidence>
<evidence type="ECO:0000269" key="3">
    <source>
    </source>
</evidence>
<name>YQFB_SCHPO</name>
<sequence>MAKRGNKKKQEAPLSLGKHTVGGRVGKPTNAKTGSALTSDKSLFDKRIVKQLKNNELFNRLTLPSQELRDGIVRENQTKPSNSNSQSNGAISIRGIAGPTNVVIENLAPGTSSDDVAATLLNFGEILNCQVNDSQGKVRASVRFSTLASAQQVVQKLDGVTADGFKLSCYIKKNSKKRRTQKK</sequence>
<dbReference type="EMBL" id="CU329672">
    <property type="protein sequence ID" value="CAA22480.1"/>
    <property type="molecule type" value="Genomic_DNA"/>
</dbReference>
<dbReference type="PIR" id="T40915">
    <property type="entry name" value="T40915"/>
</dbReference>
<dbReference type="RefSeq" id="NP_588454.1">
    <property type="nucleotide sequence ID" value="NM_001023445.2"/>
</dbReference>
<dbReference type="SMR" id="O94403"/>
<dbReference type="BioGRID" id="275629">
    <property type="interactions" value="11"/>
</dbReference>
<dbReference type="FunCoup" id="O94403">
    <property type="interactions" value="282"/>
</dbReference>
<dbReference type="STRING" id="284812.O94403"/>
<dbReference type="PaxDb" id="4896-SPCC126.11c.1"/>
<dbReference type="EnsemblFungi" id="SPCC126.11c.1">
    <property type="protein sequence ID" value="SPCC126.11c.1:pep"/>
    <property type="gene ID" value="SPCC126.11c"/>
</dbReference>
<dbReference type="KEGG" id="spo:2539056"/>
<dbReference type="PomBase" id="SPCC126.11c"/>
<dbReference type="VEuPathDB" id="FungiDB:SPCC126.11c"/>
<dbReference type="HOGENOM" id="CLU_1475959_0_0_1"/>
<dbReference type="InParanoid" id="O94403"/>
<dbReference type="OMA" id="SCYIKKN"/>
<dbReference type="PhylomeDB" id="O94403"/>
<dbReference type="PRO" id="PR:O94403"/>
<dbReference type="Proteomes" id="UP000002485">
    <property type="component" value="Chromosome III"/>
</dbReference>
<dbReference type="GO" id="GO:0005730">
    <property type="term" value="C:nucleolus"/>
    <property type="evidence" value="ECO:0007005"/>
    <property type="project" value="PomBase"/>
</dbReference>
<dbReference type="GO" id="GO:0005634">
    <property type="term" value="C:nucleus"/>
    <property type="evidence" value="ECO:0007005"/>
    <property type="project" value="PomBase"/>
</dbReference>
<dbReference type="GO" id="GO:0003729">
    <property type="term" value="F:mRNA binding"/>
    <property type="evidence" value="ECO:0000318"/>
    <property type="project" value="GO_Central"/>
</dbReference>
<dbReference type="CDD" id="cd00590">
    <property type="entry name" value="RRM_SF"/>
    <property type="match status" value="1"/>
</dbReference>
<dbReference type="Gene3D" id="3.30.70.330">
    <property type="match status" value="1"/>
</dbReference>
<dbReference type="InterPro" id="IPR012677">
    <property type="entry name" value="Nucleotide-bd_a/b_plait_sf"/>
</dbReference>
<dbReference type="InterPro" id="IPR035979">
    <property type="entry name" value="RBD_domain_sf"/>
</dbReference>
<dbReference type="InterPro" id="IPR000504">
    <property type="entry name" value="RRM_dom"/>
</dbReference>
<dbReference type="Pfam" id="PF00076">
    <property type="entry name" value="RRM_1"/>
    <property type="match status" value="1"/>
</dbReference>
<dbReference type="SMART" id="SM00360">
    <property type="entry name" value="RRM"/>
    <property type="match status" value="1"/>
</dbReference>
<dbReference type="SUPFAM" id="SSF54928">
    <property type="entry name" value="RNA-binding domain, RBD"/>
    <property type="match status" value="1"/>
</dbReference>
<dbReference type="PROSITE" id="PS50102">
    <property type="entry name" value="RRM"/>
    <property type="match status" value="1"/>
</dbReference>
<reference key="1">
    <citation type="journal article" date="2002" name="Nature">
        <title>The genome sequence of Schizosaccharomyces pombe.</title>
        <authorList>
            <person name="Wood V."/>
            <person name="Gwilliam R."/>
            <person name="Rajandream M.A."/>
            <person name="Lyne M.H."/>
            <person name="Lyne R."/>
            <person name="Stewart A."/>
            <person name="Sgouros J.G."/>
            <person name="Peat N."/>
            <person name="Hayles J."/>
            <person name="Baker S.G."/>
            <person name="Basham D."/>
            <person name="Bowman S."/>
            <person name="Brooks K."/>
            <person name="Brown D."/>
            <person name="Brown S."/>
            <person name="Chillingworth T."/>
            <person name="Churcher C.M."/>
            <person name="Collins M."/>
            <person name="Connor R."/>
            <person name="Cronin A."/>
            <person name="Davis P."/>
            <person name="Feltwell T."/>
            <person name="Fraser A."/>
            <person name="Gentles S."/>
            <person name="Goble A."/>
            <person name="Hamlin N."/>
            <person name="Harris D.E."/>
            <person name="Hidalgo J."/>
            <person name="Hodgson G."/>
            <person name="Holroyd S."/>
            <person name="Hornsby T."/>
            <person name="Howarth S."/>
            <person name="Huckle E.J."/>
            <person name="Hunt S."/>
            <person name="Jagels K."/>
            <person name="James K.D."/>
            <person name="Jones L."/>
            <person name="Jones M."/>
            <person name="Leather S."/>
            <person name="McDonald S."/>
            <person name="McLean J."/>
            <person name="Mooney P."/>
            <person name="Moule S."/>
            <person name="Mungall K.L."/>
            <person name="Murphy L.D."/>
            <person name="Niblett D."/>
            <person name="Odell C."/>
            <person name="Oliver K."/>
            <person name="O'Neil S."/>
            <person name="Pearson D."/>
            <person name="Quail M.A."/>
            <person name="Rabbinowitsch E."/>
            <person name="Rutherford K.M."/>
            <person name="Rutter S."/>
            <person name="Saunders D."/>
            <person name="Seeger K."/>
            <person name="Sharp S."/>
            <person name="Skelton J."/>
            <person name="Simmonds M.N."/>
            <person name="Squares R."/>
            <person name="Squares S."/>
            <person name="Stevens K."/>
            <person name="Taylor K."/>
            <person name="Taylor R.G."/>
            <person name="Tivey A."/>
            <person name="Walsh S.V."/>
            <person name="Warren T."/>
            <person name="Whitehead S."/>
            <person name="Woodward J.R."/>
            <person name="Volckaert G."/>
            <person name="Aert R."/>
            <person name="Robben J."/>
            <person name="Grymonprez B."/>
            <person name="Weltjens I."/>
            <person name="Vanstreels E."/>
            <person name="Rieger M."/>
            <person name="Schaefer M."/>
            <person name="Mueller-Auer S."/>
            <person name="Gabel C."/>
            <person name="Fuchs M."/>
            <person name="Duesterhoeft A."/>
            <person name="Fritzc C."/>
            <person name="Holzer E."/>
            <person name="Moestl D."/>
            <person name="Hilbert H."/>
            <person name="Borzym K."/>
            <person name="Langer I."/>
            <person name="Beck A."/>
            <person name="Lehrach H."/>
            <person name="Reinhardt R."/>
            <person name="Pohl T.M."/>
            <person name="Eger P."/>
            <person name="Zimmermann W."/>
            <person name="Wedler H."/>
            <person name="Wambutt R."/>
            <person name="Purnelle B."/>
            <person name="Goffeau A."/>
            <person name="Cadieu E."/>
            <person name="Dreano S."/>
            <person name="Gloux S."/>
            <person name="Lelaure V."/>
            <person name="Mottier S."/>
            <person name="Galibert F."/>
            <person name="Aves S.J."/>
            <person name="Xiang Z."/>
            <person name="Hunt C."/>
            <person name="Moore K."/>
            <person name="Hurst S.M."/>
            <person name="Lucas M."/>
            <person name="Rochet M."/>
            <person name="Gaillardin C."/>
            <person name="Tallada V.A."/>
            <person name="Garzon A."/>
            <person name="Thode G."/>
            <person name="Daga R.R."/>
            <person name="Cruzado L."/>
            <person name="Jimenez J."/>
            <person name="Sanchez M."/>
            <person name="del Rey F."/>
            <person name="Benito J."/>
            <person name="Dominguez A."/>
            <person name="Revuelta J.L."/>
            <person name="Moreno S."/>
            <person name="Armstrong J."/>
            <person name="Forsburg S.L."/>
            <person name="Cerutti L."/>
            <person name="Lowe T."/>
            <person name="McCombie W.R."/>
            <person name="Paulsen I."/>
            <person name="Potashkin J."/>
            <person name="Shpakovski G.V."/>
            <person name="Ussery D."/>
            <person name="Barrell B.G."/>
            <person name="Nurse P."/>
        </authorList>
    </citation>
    <scope>NUCLEOTIDE SEQUENCE [LARGE SCALE GENOMIC DNA]</scope>
    <source>
        <strain>972 / ATCC 24843</strain>
    </source>
</reference>
<reference key="2">
    <citation type="journal article" date="2006" name="Nat. Biotechnol.">
        <title>ORFeome cloning and global analysis of protein localization in the fission yeast Schizosaccharomyces pombe.</title>
        <authorList>
            <person name="Matsuyama A."/>
            <person name="Arai R."/>
            <person name="Yashiroda Y."/>
            <person name="Shirai A."/>
            <person name="Kamata A."/>
            <person name="Sekido S."/>
            <person name="Kobayashi Y."/>
            <person name="Hashimoto A."/>
            <person name="Hamamoto M."/>
            <person name="Hiraoka Y."/>
            <person name="Horinouchi S."/>
            <person name="Yoshida M."/>
        </authorList>
    </citation>
    <scope>SUBCELLULAR LOCATION [LARGE SCALE ANALYSIS]</scope>
</reference>
<protein>
    <recommendedName>
        <fullName>Uncharacterized RNA-binding protein C126.11c</fullName>
    </recommendedName>
</protein>
<gene>
    <name type="ORF">SPCC126.11c</name>
</gene>
<keyword id="KW-0539">Nucleus</keyword>
<keyword id="KW-1185">Reference proteome</keyword>
<keyword id="KW-0694">RNA-binding</keyword>
<feature type="chain" id="PRO_0000310820" description="Uncharacterized RNA-binding protein C126.11c">
    <location>
        <begin position="1"/>
        <end position="183"/>
    </location>
</feature>
<feature type="domain" description="RRM" evidence="1">
    <location>
        <begin position="100"/>
        <end position="174"/>
    </location>
</feature>
<feature type="region of interest" description="Disordered" evidence="2">
    <location>
        <begin position="1"/>
        <end position="36"/>
    </location>
</feature>
<proteinExistence type="predicted"/>
<accession>O94403</accession>